<accession>P79121</accession>
<accession>Q2KIE9</accession>
<accession>Q9TVB2</accession>
<keyword id="KW-1015">Disulfide bond</keyword>
<keyword id="KW-0272">Extracellular matrix</keyword>
<keyword id="KW-0325">Glycoprotein</keyword>
<keyword id="KW-0479">Metal-binding</keyword>
<keyword id="KW-0481">Metalloenzyme inhibitor</keyword>
<keyword id="KW-0483">Metalloprotease inhibitor</keyword>
<keyword id="KW-0646">Protease inhibitor</keyword>
<keyword id="KW-1185">Reference proteome</keyword>
<keyword id="KW-0964">Secreted</keyword>
<keyword id="KW-0732">Signal</keyword>
<keyword id="KW-0862">Zinc</keyword>
<dbReference type="EMBL" id="U77588">
    <property type="protein sequence ID" value="AAB47751.1"/>
    <property type="molecule type" value="mRNA"/>
</dbReference>
<dbReference type="EMBL" id="BC112663">
    <property type="protein sequence ID" value="AAI12664.1"/>
    <property type="molecule type" value="mRNA"/>
</dbReference>
<dbReference type="EMBL" id="AF144765">
    <property type="protein sequence ID" value="AAD30305.1"/>
    <property type="molecule type" value="mRNA"/>
</dbReference>
<dbReference type="RefSeq" id="NP_776898.2">
    <property type="nucleotide sequence ID" value="NM_174473.4"/>
</dbReference>
<dbReference type="SMR" id="P79121"/>
<dbReference type="FunCoup" id="P79121">
    <property type="interactions" value="160"/>
</dbReference>
<dbReference type="STRING" id="9913.ENSBTAP00000027504"/>
<dbReference type="MEROPS" id="I35.003"/>
<dbReference type="GlyCosmos" id="P79121">
    <property type="glycosylation" value="1 site, No reported glycans"/>
</dbReference>
<dbReference type="GlyGen" id="P79121">
    <property type="glycosylation" value="1 site"/>
</dbReference>
<dbReference type="PaxDb" id="9913-ENSBTAP00000027504"/>
<dbReference type="GeneID" id="282094"/>
<dbReference type="KEGG" id="bta:282094"/>
<dbReference type="CTD" id="7078"/>
<dbReference type="eggNOG" id="KOG4745">
    <property type="taxonomic scope" value="Eukaryota"/>
</dbReference>
<dbReference type="InParanoid" id="P79121"/>
<dbReference type="OrthoDB" id="6041373at2759"/>
<dbReference type="Proteomes" id="UP000009136">
    <property type="component" value="Unplaced"/>
</dbReference>
<dbReference type="GO" id="GO:0031012">
    <property type="term" value="C:extracellular matrix"/>
    <property type="evidence" value="ECO:0000318"/>
    <property type="project" value="GO_Central"/>
</dbReference>
<dbReference type="GO" id="GO:0005615">
    <property type="term" value="C:extracellular space"/>
    <property type="evidence" value="ECO:0000318"/>
    <property type="project" value="GO_Central"/>
</dbReference>
<dbReference type="GO" id="GO:0008191">
    <property type="term" value="F:metalloendopeptidase inhibitor activity"/>
    <property type="evidence" value="ECO:0000318"/>
    <property type="project" value="GO_Central"/>
</dbReference>
<dbReference type="GO" id="GO:0008270">
    <property type="term" value="F:zinc ion binding"/>
    <property type="evidence" value="ECO:0000250"/>
    <property type="project" value="UniProtKB"/>
</dbReference>
<dbReference type="GO" id="GO:0051045">
    <property type="term" value="P:negative regulation of membrane protein ectodomain proteolysis"/>
    <property type="evidence" value="ECO:0000318"/>
    <property type="project" value="GO_Central"/>
</dbReference>
<dbReference type="GO" id="GO:0034097">
    <property type="term" value="P:response to cytokine"/>
    <property type="evidence" value="ECO:0000318"/>
    <property type="project" value="GO_Central"/>
</dbReference>
<dbReference type="GO" id="GO:0009725">
    <property type="term" value="P:response to hormone"/>
    <property type="evidence" value="ECO:0000318"/>
    <property type="project" value="GO_Central"/>
</dbReference>
<dbReference type="CDD" id="cd03585">
    <property type="entry name" value="NTR_TIMP"/>
    <property type="match status" value="1"/>
</dbReference>
<dbReference type="FunFam" id="3.90.370.10:FF:000001">
    <property type="entry name" value="Metalloproteinase inhibitor 3"/>
    <property type="match status" value="1"/>
</dbReference>
<dbReference type="FunFam" id="2.40.50.120:FF:000005">
    <property type="entry name" value="Metalloproteinase inhibitor 3 precursor"/>
    <property type="match status" value="1"/>
</dbReference>
<dbReference type="Gene3D" id="2.40.50.120">
    <property type="match status" value="1"/>
</dbReference>
<dbReference type="Gene3D" id="3.90.370.10">
    <property type="entry name" value="Tissue inhibitor of metalloproteinase-1. Chain B, domain 1"/>
    <property type="match status" value="1"/>
</dbReference>
<dbReference type="InterPro" id="IPR001134">
    <property type="entry name" value="Netrin_domain"/>
</dbReference>
<dbReference type="InterPro" id="IPR001820">
    <property type="entry name" value="TIMP"/>
</dbReference>
<dbReference type="InterPro" id="IPR008993">
    <property type="entry name" value="TIMP-like_OB-fold"/>
</dbReference>
<dbReference type="InterPro" id="IPR027465">
    <property type="entry name" value="TIMP_C"/>
</dbReference>
<dbReference type="InterPro" id="IPR030490">
    <property type="entry name" value="TIMP_CS"/>
</dbReference>
<dbReference type="PANTHER" id="PTHR11844">
    <property type="entry name" value="METALLOPROTEASE INHIBITOR"/>
    <property type="match status" value="1"/>
</dbReference>
<dbReference type="PANTHER" id="PTHR11844:SF22">
    <property type="entry name" value="METALLOPROTEINASE INHIBITOR 3"/>
    <property type="match status" value="1"/>
</dbReference>
<dbReference type="Pfam" id="PF00965">
    <property type="entry name" value="TIMP"/>
    <property type="match status" value="1"/>
</dbReference>
<dbReference type="SMART" id="SM00206">
    <property type="entry name" value="NTR"/>
    <property type="match status" value="1"/>
</dbReference>
<dbReference type="SUPFAM" id="SSF50242">
    <property type="entry name" value="TIMP-like"/>
    <property type="match status" value="1"/>
</dbReference>
<dbReference type="PROSITE" id="PS50189">
    <property type="entry name" value="NTR"/>
    <property type="match status" value="1"/>
</dbReference>
<dbReference type="PROSITE" id="PS00288">
    <property type="entry name" value="TIMP"/>
    <property type="match status" value="1"/>
</dbReference>
<feature type="signal peptide" evidence="5">
    <location>
        <begin position="1"/>
        <end position="23"/>
    </location>
</feature>
<feature type="chain" id="PRO_0000034339" description="Metalloproteinase inhibitor 3">
    <location>
        <begin position="24"/>
        <end position="211"/>
    </location>
</feature>
<feature type="domain" description="NTR" evidence="6">
    <location>
        <begin position="24"/>
        <end position="143"/>
    </location>
</feature>
<feature type="region of interest" description="Involved in metalloproteinase-binding" evidence="2">
    <location>
        <begin position="24"/>
        <end position="27"/>
    </location>
</feature>
<feature type="region of interest" description="Involved in metalloproteinase-binding" evidence="2">
    <location>
        <begin position="88"/>
        <end position="89"/>
    </location>
</feature>
<feature type="region of interest" description="Mediates interaction with EFEMP1" evidence="1">
    <location>
        <begin position="105"/>
        <end position="188"/>
    </location>
</feature>
<feature type="binding site" evidence="2">
    <location>
        <position position="24"/>
    </location>
    <ligand>
        <name>Zn(2+)</name>
        <dbReference type="ChEBI" id="CHEBI:29105"/>
        <note>ligand shared with metalloproteinase partner</note>
    </ligand>
</feature>
<feature type="site" description="Involved in metalloproteinase-binding" evidence="2">
    <location>
        <position position="37"/>
    </location>
</feature>
<feature type="glycosylation site" description="N-linked (GlcNAc...) asparagine" evidence="5">
    <location>
        <position position="207"/>
    </location>
</feature>
<feature type="disulfide bond" evidence="6">
    <location>
        <begin position="24"/>
        <end position="91"/>
    </location>
</feature>
<feature type="disulfide bond" evidence="6">
    <location>
        <begin position="26"/>
        <end position="118"/>
    </location>
</feature>
<feature type="disulfide bond" evidence="6">
    <location>
        <begin position="36"/>
        <end position="143"/>
    </location>
</feature>
<feature type="disulfide bond" evidence="6">
    <location>
        <begin position="145"/>
        <end position="192"/>
    </location>
</feature>
<feature type="disulfide bond" evidence="6">
    <location>
        <begin position="150"/>
        <end position="155"/>
    </location>
</feature>
<feature type="disulfide bond" evidence="6">
    <location>
        <begin position="163"/>
        <end position="184"/>
    </location>
</feature>
<feature type="sequence conflict" description="In Ref. 2; AAI12664." evidence="7" ref="2">
    <original>S</original>
    <variation>T</variation>
    <location>
        <position position="159"/>
    </location>
</feature>
<feature type="sequence conflict" description="In Ref. 2; AAI12664." evidence="7" ref="2">
    <original>F</original>
    <variation>L</variation>
    <location>
        <position position="169"/>
    </location>
</feature>
<name>TIMP3_BOVIN</name>
<protein>
    <recommendedName>
        <fullName>Metalloproteinase inhibitor 3</fullName>
    </recommendedName>
    <alternativeName>
        <fullName>Tissue inhibitor of metalloproteinases 3</fullName>
        <shortName>TIMP-3</shortName>
    </alternativeName>
</protein>
<evidence type="ECO:0000250" key="1"/>
<evidence type="ECO:0000250" key="2">
    <source>
        <dbReference type="UniProtKB" id="P16035"/>
    </source>
</evidence>
<evidence type="ECO:0000250" key="3">
    <source>
        <dbReference type="UniProtKB" id="P35625"/>
    </source>
</evidence>
<evidence type="ECO:0000250" key="4">
    <source>
        <dbReference type="UniProtKB" id="P39876"/>
    </source>
</evidence>
<evidence type="ECO:0000255" key="5"/>
<evidence type="ECO:0000255" key="6">
    <source>
        <dbReference type="PROSITE-ProRule" id="PRU00295"/>
    </source>
</evidence>
<evidence type="ECO:0000305" key="7"/>
<organism>
    <name type="scientific">Bos taurus</name>
    <name type="common">Bovine</name>
    <dbReference type="NCBI Taxonomy" id="9913"/>
    <lineage>
        <taxon>Eukaryota</taxon>
        <taxon>Metazoa</taxon>
        <taxon>Chordata</taxon>
        <taxon>Craniata</taxon>
        <taxon>Vertebrata</taxon>
        <taxon>Euteleostomi</taxon>
        <taxon>Mammalia</taxon>
        <taxon>Eutheria</taxon>
        <taxon>Laurasiatheria</taxon>
        <taxon>Artiodactyla</taxon>
        <taxon>Ruminantia</taxon>
        <taxon>Pecora</taxon>
        <taxon>Bovidae</taxon>
        <taxon>Bovinae</taxon>
        <taxon>Bos</taxon>
    </lineage>
</organism>
<sequence>MTPWLGLVVLLGSWSLGDWGAEACTCSPSHPQDAFCNSDIVIRAKVVGKKLLKEGPFGTMVYTIKQMKMYRGFTKMPHVQYIHTEASESLCGLKLEVNKYQYLLTGRVYDGKMYTGLCNFVERWDQLTLSQRKGLNYRYHLGCNCKIKSCYYLPCFVTSKNECLWTDMFSNFGYPGYQSKHYACIRQKGGYCSWYRGWAPPDKSIINATDP</sequence>
<gene>
    <name type="primary">TIMP3</name>
</gene>
<proteinExistence type="evidence at transcript level"/>
<reference key="1">
    <citation type="journal article" date="1996" name="DNA Cell Biol.">
        <title>Regulation of tissue inhibitor of metalloproteinases-3 gene expression by transforming growth factor-beta and dexamethasone in bovine and human articular chondrocytes.</title>
        <authorList>
            <person name="Su S."/>
            <person name="Dehnade F."/>
            <person name="Zafarullah M."/>
        </authorList>
    </citation>
    <scope>NUCLEOTIDE SEQUENCE [MRNA]</scope>
    <source>
        <tissue>Placenta</tissue>
    </source>
</reference>
<reference key="2">
    <citation type="submission" date="2006-01" db="EMBL/GenBank/DDBJ databases">
        <authorList>
            <consortium name="NIH - Mammalian Gene Collection (MGC) project"/>
        </authorList>
    </citation>
    <scope>NUCLEOTIDE SEQUENCE [LARGE SCALE MRNA]</scope>
    <source>
        <strain>Hereford</strain>
        <tissue>Testis</tissue>
    </source>
</reference>
<reference key="3">
    <citation type="journal article" date="2001" name="J. Anim. Sci.">
        <title>Coordinate expression of matrix-degrading proteinases and their activators and inhibitors in bovine skeletal muscle.</title>
        <authorList>
            <person name="Balcerzak D."/>
            <person name="Querenguesser L."/>
            <person name="Dixon W.T."/>
            <person name="Baracos V.E."/>
        </authorList>
    </citation>
    <scope>NUCLEOTIDE SEQUENCE [MRNA] OF 10-118</scope>
    <source>
        <tissue>Skeletal muscle</tissue>
    </source>
</reference>
<comment type="function">
    <text evidence="3 4">Mediates a variety of processes including matrix regulation and turnover, inflammation, and angiogenesis, through reversible inhibition of zinc protease superfamily enzymes, primarily matrix metalloproteinases (MMPs). Regulates extracellular matrix (ECM) remodeling through inhibition of matrix metalloproteinases (MMP) including MMP-1, MMP-2, MMP-3, MMP-7, MMP-9, MMP-13, MMP-14 and MMP-15. Additionally, modulates the processing of amyloid precursor protein (APP) and apolipoprotein E receptor ApoER2 by inhibiting two alpha-secretases ADAM10 and ADAM17. Functions as a tumor suppressor and a potent inhibitor of angiogenesis. Exerts its anti-angiogenic effect by directly interacting with vascular endothelial growth factor (VEGF) receptor-2/KDR, preventing its binding to the VEGFA ligand. Selectively induces apoptosis in angiogenic endothelial cells through a caspase-independent cell death pathway. Mechanistically, inhibits matrix-induced focal adhesion kinase PTK2 tyrosine phosphorylation and association with paxillin/PXN and disrupts the incorporation of ITGB3, PTK2 and PXN into focal adhesion contacts on the matrix.</text>
</comment>
<comment type="subunit">
    <text evidence="3">Interacts with EFEMP1. Interacts with KDR.</text>
</comment>
<comment type="subcellular location">
    <subcellularLocation>
        <location evidence="3">Secreted</location>
        <location evidence="3">Extracellular space</location>
        <location evidence="3">Extracellular matrix</location>
    </subcellularLocation>
</comment>
<comment type="similarity">
    <text evidence="7">Belongs to the protease inhibitor I35 (TIMP) family.</text>
</comment>